<name>OBL1_ARATH</name>
<protein>
    <recommendedName>
        <fullName evidence="5">Triacylglycerol lipase OBL1</fullName>
        <ecNumber evidence="3">3.1.1.-</ecNumber>
    </recommendedName>
    <alternativeName>
        <fullName evidence="4">Oil body lipase 1</fullName>
        <shortName evidence="4">AtOBL1</shortName>
    </alternativeName>
</protein>
<evidence type="ECO:0000250" key="1">
    <source>
        <dbReference type="UniProtKB" id="Q948R1"/>
    </source>
</evidence>
<evidence type="ECO:0000255" key="2"/>
<evidence type="ECO:0000269" key="3">
    <source>
    </source>
</evidence>
<evidence type="ECO:0000303" key="4">
    <source>
    </source>
</evidence>
<evidence type="ECO:0000305" key="5"/>
<evidence type="ECO:0000305" key="6">
    <source>
    </source>
</evidence>
<evidence type="ECO:0000312" key="7">
    <source>
        <dbReference type="Araport" id="AT3G14360"/>
    </source>
</evidence>
<gene>
    <name evidence="4" type="primary">OBL1</name>
    <name evidence="7" type="ordered locus">At3g14360</name>
</gene>
<accession>F4JFU8</accession>
<accession>A0A178V8G3</accession>
<accession>Q8H1D5</accession>
<accession>Q93ZZ5</accession>
<accession>Q9LUL3</accession>
<reference key="1">
    <citation type="journal article" date="2000" name="DNA Res.">
        <title>Structural analysis of Arabidopsis thaliana chromosome 3. I. Sequence features of the regions of 4,504,864 bp covered by sixty P1 and TAC clones.</title>
        <authorList>
            <person name="Sato S."/>
            <person name="Nakamura Y."/>
            <person name="Kaneko T."/>
            <person name="Katoh T."/>
            <person name="Asamizu E."/>
            <person name="Tabata S."/>
        </authorList>
    </citation>
    <scope>NUCLEOTIDE SEQUENCE [LARGE SCALE GENOMIC DNA]</scope>
    <source>
        <strain>cv. Columbia</strain>
    </source>
</reference>
<reference key="2">
    <citation type="journal article" date="2017" name="Plant J.">
        <title>Araport11: a complete reannotation of the Arabidopsis thaliana reference genome.</title>
        <authorList>
            <person name="Cheng C.Y."/>
            <person name="Krishnakumar V."/>
            <person name="Chan A.P."/>
            <person name="Thibaud-Nissen F."/>
            <person name="Schobel S."/>
            <person name="Town C.D."/>
        </authorList>
    </citation>
    <scope>GENOME REANNOTATION</scope>
    <source>
        <strain>cv. Columbia</strain>
    </source>
</reference>
<reference key="3">
    <citation type="journal article" date="2003" name="Science">
        <title>Empirical analysis of transcriptional activity in the Arabidopsis genome.</title>
        <authorList>
            <person name="Yamada K."/>
            <person name="Lim J."/>
            <person name="Dale J.M."/>
            <person name="Chen H."/>
            <person name="Shinn P."/>
            <person name="Palm C.J."/>
            <person name="Southwick A.M."/>
            <person name="Wu H.C."/>
            <person name="Kim C.J."/>
            <person name="Nguyen M."/>
            <person name="Pham P.K."/>
            <person name="Cheuk R.F."/>
            <person name="Karlin-Newmann G."/>
            <person name="Liu S.X."/>
            <person name="Lam B."/>
            <person name="Sakano H."/>
            <person name="Wu T."/>
            <person name="Yu G."/>
            <person name="Miranda M."/>
            <person name="Quach H.L."/>
            <person name="Tripp M."/>
            <person name="Chang C.H."/>
            <person name="Lee J.M."/>
            <person name="Toriumi M.J."/>
            <person name="Chan M.M."/>
            <person name="Tang C.C."/>
            <person name="Onodera C.S."/>
            <person name="Deng J.M."/>
            <person name="Akiyama K."/>
            <person name="Ansari Y."/>
            <person name="Arakawa T."/>
            <person name="Banh J."/>
            <person name="Banno F."/>
            <person name="Bowser L."/>
            <person name="Brooks S.Y."/>
            <person name="Carninci P."/>
            <person name="Chao Q."/>
            <person name="Choy N."/>
            <person name="Enju A."/>
            <person name="Goldsmith A.D."/>
            <person name="Gurjal M."/>
            <person name="Hansen N.F."/>
            <person name="Hayashizaki Y."/>
            <person name="Johnson-Hopson C."/>
            <person name="Hsuan V.W."/>
            <person name="Iida K."/>
            <person name="Karnes M."/>
            <person name="Khan S."/>
            <person name="Koesema E."/>
            <person name="Ishida J."/>
            <person name="Jiang P.X."/>
            <person name="Jones T."/>
            <person name="Kawai J."/>
            <person name="Kamiya A."/>
            <person name="Meyers C."/>
            <person name="Nakajima M."/>
            <person name="Narusaka M."/>
            <person name="Seki M."/>
            <person name="Sakurai T."/>
            <person name="Satou M."/>
            <person name="Tamse R."/>
            <person name="Vaysberg M."/>
            <person name="Wallender E.K."/>
            <person name="Wong C."/>
            <person name="Yamamura Y."/>
            <person name="Yuan S."/>
            <person name="Shinozaki K."/>
            <person name="Davis R.W."/>
            <person name="Theologis A."/>
            <person name="Ecker J.R."/>
        </authorList>
    </citation>
    <scope>NUCLEOTIDE SEQUENCE [LARGE SCALE MRNA] OF 7-518 AND 50-518</scope>
    <source>
        <strain>cv. Columbia</strain>
    </source>
</reference>
<reference key="4">
    <citation type="journal article" date="2018" name="New Phytol.">
        <title>Characterization of the enzymatic activity and physiological function of the lipid droplet-associated triacylglycerol lipase AtOBL1.</title>
        <authorList>
            <person name="Mueller A.O."/>
            <person name="Ischebeck T."/>
        </authorList>
    </citation>
    <scope>FUNCTION</scope>
    <scope>CATALYTIC ACTIVITY</scope>
    <scope>ACTIVE SITE</scope>
    <scope>BIOPHYSICOCHEMICAL PROPERTIES</scope>
    <scope>SUBCELLULAR LOCATION</scope>
    <scope>TISSUE SPECIFICITY</scope>
    <scope>MUTAGENESIS OF SER-339</scope>
    <scope>DISRUPTION PHENOTYPE</scope>
</reference>
<proteinExistence type="evidence at protein level"/>
<sequence>MHKDNDSGSGSNPGQVSNYLIVRPHRGGYIDLFRYGVRDDQTSKAKFLEMPDNREWSTITIDEEAEDHRWVIVVSILVRKIIRLLRTPMEFTGFVVDFFLNLFSANGGFFGLLLRLIQAKVVIPERGSVTFVSTIGQLDGRISLYKEWNFVEHLEGIDSVDSGRVKIELGSRGLMDLCVMASKLAYENAKVVENVVDLHWKMNLVEFLDCWNDYQKQMSTQVFVFTDKQKDANLIVISFRGTEPFDADDWGTDFDYSWYEVPNVGKLHMGFLEAMGLGNRDDTTTFHYNLFEQTSSEEENSKKNLLDMVERSAYYAVRVILKRLLSEHENARFVVTGHSLGGALAILFPTLLVLNEETEIMKRLLGVYTFGQPRIGNREVGLFMKAQLNQPVDRYFRVVYCNDIVPRLPYDDKTFLYKHFGLCLFYDSFYNETKAEDEPDPNPYGLRYKILGHVIAVWELVRGLTMGYTHGPDYKEGWFRILFRLMGLVIPGLSDHCMTDYVNSVRLGPDNELQMSSL</sequence>
<comment type="function">
    <text evidence="3 6">Acid lipase that can hydrolyze a range of triacylglycerols without a clear preference for acyl-chains (PubMed:29178188). Can also cleave 1,2-diacylglycerol, 1,3-diacylglycerol and 1-monoacylglycerol, but not phosphatidylcholine, phosphatidylethanolamine, or sterol esters (PubMed:29178188). Required for pollen tube growth (PubMed:29178188). Triacylglycerol hydrolysis by OBL1 may provide acyl groups for the synthesis of membrane lipids in growing pollen tubes (Probable).</text>
</comment>
<comment type="catalytic activity">
    <reaction evidence="3">
        <text>1,2-di-(9Z-octadecenoyl)-glycerol + (9Z)-octadecenoate + H(+) = 1,2,3-tri-(9Z-octadecenoyl)-glycerol + H2O</text>
        <dbReference type="Rhea" id="RHEA:38379"/>
        <dbReference type="ChEBI" id="CHEBI:15377"/>
        <dbReference type="ChEBI" id="CHEBI:15378"/>
        <dbReference type="ChEBI" id="CHEBI:30823"/>
        <dbReference type="ChEBI" id="CHEBI:52323"/>
        <dbReference type="ChEBI" id="CHEBI:53753"/>
    </reaction>
    <physiologicalReaction direction="right-to-left" evidence="3">
        <dbReference type="Rhea" id="RHEA:38381"/>
    </physiologicalReaction>
</comment>
<comment type="catalytic activity">
    <reaction evidence="3">
        <text>1-(9Z-octadecenoyl)-glycerol + H2O = glycerol + (9Z)-octadecenoate + H(+)</text>
        <dbReference type="Rhea" id="RHEA:38487"/>
        <dbReference type="ChEBI" id="CHEBI:15377"/>
        <dbReference type="ChEBI" id="CHEBI:15378"/>
        <dbReference type="ChEBI" id="CHEBI:17754"/>
        <dbReference type="ChEBI" id="CHEBI:30823"/>
        <dbReference type="ChEBI" id="CHEBI:75342"/>
    </reaction>
    <physiologicalReaction direction="left-to-right" evidence="3">
        <dbReference type="Rhea" id="RHEA:38488"/>
    </physiologicalReaction>
</comment>
<comment type="biophysicochemical properties">
    <phDependence>
        <text evidence="3">Optimum pH is 5.5.</text>
    </phDependence>
</comment>
<comment type="subcellular location">
    <subcellularLocation>
        <location evidence="3">Lipid droplet</location>
    </subcellularLocation>
    <subcellularLocation>
        <location evidence="2">Membrane</location>
        <topology evidence="2">Single-pass membrane protein</topology>
    </subcellularLocation>
    <text evidence="6">Associates with the oil body membrane.</text>
</comment>
<comment type="tissue specificity">
    <text evidence="3">Expressed in pollen grains, pollen tubes, developing embryos, developing seeds and germinating seeds.</text>
</comment>
<comment type="disruption phenotype">
    <text evidence="3">Reduced pollen tube growth.</text>
</comment>
<comment type="similarity">
    <text evidence="5">Belongs to the AB hydrolase superfamily. Lipase family.</text>
</comment>
<comment type="sequence caution" evidence="5">
    <conflict type="erroneous initiation">
        <sequence resource="EMBL-CDS" id="AAL07239"/>
    </conflict>
    <text>Truncated N-terminus.</text>
</comment>
<comment type="sequence caution" evidence="5">
    <conflict type="erroneous gene model prediction">
        <sequence resource="EMBL-CDS" id="BAB01041"/>
    </conflict>
</comment>
<feature type="chain" id="PRO_0000450282" description="Triacylglycerol lipase OBL1">
    <location>
        <begin position="1"/>
        <end position="518"/>
    </location>
</feature>
<feature type="transmembrane region" description="Helical" evidence="2">
    <location>
        <begin position="93"/>
        <end position="113"/>
    </location>
</feature>
<feature type="short sequence motif" description="GXSXG" evidence="6">
    <location>
        <begin position="337"/>
        <end position="341"/>
    </location>
</feature>
<feature type="active site" description="Nucleophile" evidence="6">
    <location>
        <position position="339"/>
    </location>
</feature>
<feature type="active site" description="Charge relay system" evidence="1">
    <location>
        <position position="403"/>
    </location>
</feature>
<feature type="active site" description="Charge relay system" evidence="1">
    <location>
        <position position="496"/>
    </location>
</feature>
<feature type="mutagenesis site" description="Loss of catalytic activity; reduces pollen tube growth." evidence="3">
    <original>S</original>
    <variation>A</variation>
    <location>
        <position position="339"/>
    </location>
</feature>
<feature type="sequence conflict" description="In Ref. 3; AAL07239." evidence="5" ref="3">
    <original>L</original>
    <variation>H</variation>
    <location>
        <position position="305"/>
    </location>
</feature>
<dbReference type="EC" id="3.1.1.-" evidence="3"/>
<dbReference type="EMBL" id="AB022220">
    <property type="protein sequence ID" value="BAB01041.1"/>
    <property type="status" value="ALT_SEQ"/>
    <property type="molecule type" value="Genomic_DNA"/>
</dbReference>
<dbReference type="EMBL" id="CP002686">
    <property type="protein sequence ID" value="AEE75507.1"/>
    <property type="molecule type" value="Genomic_DNA"/>
</dbReference>
<dbReference type="EMBL" id="AY056160">
    <property type="protein sequence ID" value="AAL07239.1"/>
    <property type="status" value="ALT_INIT"/>
    <property type="molecule type" value="mRNA"/>
</dbReference>
<dbReference type="EMBL" id="AY150508">
    <property type="protein sequence ID" value="AAN13024.1"/>
    <property type="molecule type" value="mRNA"/>
</dbReference>
<dbReference type="RefSeq" id="NP_566484.2">
    <property type="nucleotide sequence ID" value="NM_112294.5"/>
</dbReference>
<dbReference type="SMR" id="F4JFU8"/>
<dbReference type="FunCoup" id="F4JFU8">
    <property type="interactions" value="46"/>
</dbReference>
<dbReference type="STRING" id="3702.F4JFU8"/>
<dbReference type="SwissLipids" id="SLP:000001943"/>
<dbReference type="ESTHER" id="arath-At3g14360">
    <property type="family name" value="Triacylglycerol-lipase-OBL1-like"/>
</dbReference>
<dbReference type="iPTMnet" id="F4JFU8"/>
<dbReference type="PaxDb" id="3702-AT3G14360.1"/>
<dbReference type="ProteomicsDB" id="208150"/>
<dbReference type="EnsemblPlants" id="AT3G14360.1">
    <property type="protein sequence ID" value="AT3G14360.1"/>
    <property type="gene ID" value="AT3G14360"/>
</dbReference>
<dbReference type="GeneID" id="820657"/>
<dbReference type="Gramene" id="AT3G14360.1">
    <property type="protein sequence ID" value="AT3G14360.1"/>
    <property type="gene ID" value="AT3G14360"/>
</dbReference>
<dbReference type="KEGG" id="ath:AT3G14360"/>
<dbReference type="Araport" id="AT3G14360"/>
<dbReference type="TAIR" id="AT3G14360">
    <property type="gene designation" value="ATOBL1"/>
</dbReference>
<dbReference type="eggNOG" id="KOG4569">
    <property type="taxonomic scope" value="Eukaryota"/>
</dbReference>
<dbReference type="HOGENOM" id="CLU_032957_2_0_1"/>
<dbReference type="InParanoid" id="F4JFU8"/>
<dbReference type="OMA" id="PEMVEMT"/>
<dbReference type="PRO" id="PR:F4JFU8"/>
<dbReference type="Proteomes" id="UP000006548">
    <property type="component" value="Chromosome 3"/>
</dbReference>
<dbReference type="ExpressionAtlas" id="F4JFU8">
    <property type="expression patterns" value="baseline and differential"/>
</dbReference>
<dbReference type="GO" id="GO:0005811">
    <property type="term" value="C:lipid droplet"/>
    <property type="evidence" value="ECO:0000314"/>
    <property type="project" value="TAIR"/>
</dbReference>
<dbReference type="GO" id="GO:0016020">
    <property type="term" value="C:membrane"/>
    <property type="evidence" value="ECO:0007669"/>
    <property type="project" value="UniProtKB-SubCell"/>
</dbReference>
<dbReference type="GO" id="GO:0090406">
    <property type="term" value="C:pollen tube"/>
    <property type="evidence" value="ECO:0000314"/>
    <property type="project" value="TAIR"/>
</dbReference>
<dbReference type="GO" id="GO:0047372">
    <property type="term" value="F:monoacylglycerol lipase activity"/>
    <property type="evidence" value="ECO:0000314"/>
    <property type="project" value="TAIR"/>
</dbReference>
<dbReference type="GO" id="GO:0004806">
    <property type="term" value="F:triacylglycerol lipase activity"/>
    <property type="evidence" value="ECO:0000314"/>
    <property type="project" value="TAIR"/>
</dbReference>
<dbReference type="GO" id="GO:0016042">
    <property type="term" value="P:lipid catabolic process"/>
    <property type="evidence" value="ECO:0007669"/>
    <property type="project" value="UniProtKB-KW"/>
</dbReference>
<dbReference type="CDD" id="cd00519">
    <property type="entry name" value="Lipase_3"/>
    <property type="match status" value="1"/>
</dbReference>
<dbReference type="Gene3D" id="3.40.50.1820">
    <property type="entry name" value="alpha/beta hydrolase"/>
    <property type="match status" value="1"/>
</dbReference>
<dbReference type="InterPro" id="IPR029058">
    <property type="entry name" value="AB_hydrolase_fold"/>
</dbReference>
<dbReference type="InterPro" id="IPR002921">
    <property type="entry name" value="Fungal_lipase-type"/>
</dbReference>
<dbReference type="InterPro" id="IPR044819">
    <property type="entry name" value="OBL-like"/>
</dbReference>
<dbReference type="PANTHER" id="PTHR46086">
    <property type="entry name" value="ALPHA/BETA-HYDROLASES SUPERFAMILY PROTEIN"/>
    <property type="match status" value="1"/>
</dbReference>
<dbReference type="PANTHER" id="PTHR46086:SF3">
    <property type="entry name" value="TRIACYLGLYCEROL LIPASE OBL1"/>
    <property type="match status" value="1"/>
</dbReference>
<dbReference type="Pfam" id="PF01764">
    <property type="entry name" value="Lipase_3"/>
    <property type="match status" value="1"/>
</dbReference>
<dbReference type="SUPFAM" id="SSF53474">
    <property type="entry name" value="alpha/beta-Hydrolases"/>
    <property type="match status" value="1"/>
</dbReference>
<organism>
    <name type="scientific">Arabidopsis thaliana</name>
    <name type="common">Mouse-ear cress</name>
    <dbReference type="NCBI Taxonomy" id="3702"/>
    <lineage>
        <taxon>Eukaryota</taxon>
        <taxon>Viridiplantae</taxon>
        <taxon>Streptophyta</taxon>
        <taxon>Embryophyta</taxon>
        <taxon>Tracheophyta</taxon>
        <taxon>Spermatophyta</taxon>
        <taxon>Magnoliopsida</taxon>
        <taxon>eudicotyledons</taxon>
        <taxon>Gunneridae</taxon>
        <taxon>Pentapetalae</taxon>
        <taxon>rosids</taxon>
        <taxon>malvids</taxon>
        <taxon>Brassicales</taxon>
        <taxon>Brassicaceae</taxon>
        <taxon>Camelineae</taxon>
        <taxon>Arabidopsis</taxon>
    </lineage>
</organism>
<keyword id="KW-0378">Hydrolase</keyword>
<keyword id="KW-0442">Lipid degradation</keyword>
<keyword id="KW-0551">Lipid droplet</keyword>
<keyword id="KW-0443">Lipid metabolism</keyword>
<keyword id="KW-0472">Membrane</keyword>
<keyword id="KW-1185">Reference proteome</keyword>
<keyword id="KW-0812">Transmembrane</keyword>
<keyword id="KW-1133">Transmembrane helix</keyword>